<reference key="1">
    <citation type="journal article" date="1992" name="EMBO J.">
        <title>Rapid activation of a novel plant defense gene is strictly dependent on the Arabidopsis RPM1 disease resistance locus.</title>
        <authorList>
            <person name="Kiedrowski S."/>
            <person name="Kawalleck P."/>
            <person name="Hahlbrock K."/>
            <person name="Somssich I.E."/>
            <person name="Dangl J.L."/>
        </authorList>
    </citation>
    <scope>NUCLEOTIDE SEQUENCE [MRNA]</scope>
</reference>
<organism>
    <name type="scientific">Petroselinum crispum</name>
    <name type="common">Parsley</name>
    <name type="synonym">Petroselinum hortense</name>
    <dbReference type="NCBI Taxonomy" id="4043"/>
    <lineage>
        <taxon>Eukaryota</taxon>
        <taxon>Viridiplantae</taxon>
        <taxon>Streptophyta</taxon>
        <taxon>Embryophyta</taxon>
        <taxon>Tracheophyta</taxon>
        <taxon>Spermatophyta</taxon>
        <taxon>Magnoliopsida</taxon>
        <taxon>eudicotyledons</taxon>
        <taxon>Gunneridae</taxon>
        <taxon>Pentapetalae</taxon>
        <taxon>asterids</taxon>
        <taxon>campanulids</taxon>
        <taxon>Apiales</taxon>
        <taxon>Apiaceae</taxon>
        <taxon>Apioideae</taxon>
        <taxon>apioid superclade</taxon>
        <taxon>Apieae</taxon>
        <taxon>Petroselinum</taxon>
    </lineage>
</organism>
<evidence type="ECO:0000250" key="1"/>
<evidence type="ECO:0000305" key="2"/>
<accession>P42754</accession>
<dbReference type="EC" id="1.1.1.255"/>
<dbReference type="EMBL" id="X67817">
    <property type="protein sequence ID" value="CAA48028.1"/>
    <property type="molecule type" value="mRNA"/>
</dbReference>
<dbReference type="PIR" id="S28045">
    <property type="entry name" value="S28045"/>
</dbReference>
<dbReference type="SMR" id="P42754"/>
<dbReference type="GO" id="GO:0046029">
    <property type="term" value="F:mannitol dehydrogenase activity"/>
    <property type="evidence" value="ECO:0007669"/>
    <property type="project" value="UniProtKB-EC"/>
</dbReference>
<dbReference type="GO" id="GO:0008270">
    <property type="term" value="F:zinc ion binding"/>
    <property type="evidence" value="ECO:0007669"/>
    <property type="project" value="InterPro"/>
</dbReference>
<dbReference type="CDD" id="cd05283">
    <property type="entry name" value="CAD1"/>
    <property type="match status" value="1"/>
</dbReference>
<dbReference type="FunFam" id="3.40.50.720:FF:000022">
    <property type="entry name" value="Cinnamyl alcohol dehydrogenase"/>
    <property type="match status" value="1"/>
</dbReference>
<dbReference type="FunFam" id="3.90.180.10:FF:000004">
    <property type="entry name" value="probable cinnamyl alcohol dehydrogenase"/>
    <property type="match status" value="1"/>
</dbReference>
<dbReference type="FunFam" id="3.90.180.10:FF:000100">
    <property type="entry name" value="Putative cinnamyl alcohol dehydrogenase 6"/>
    <property type="match status" value="1"/>
</dbReference>
<dbReference type="Gene3D" id="3.90.180.10">
    <property type="entry name" value="Medium-chain alcohol dehydrogenases, catalytic domain"/>
    <property type="match status" value="1"/>
</dbReference>
<dbReference type="Gene3D" id="3.40.50.720">
    <property type="entry name" value="NAD(P)-binding Rossmann-like Domain"/>
    <property type="match status" value="1"/>
</dbReference>
<dbReference type="InterPro" id="IPR013149">
    <property type="entry name" value="ADH-like_C"/>
</dbReference>
<dbReference type="InterPro" id="IPR013154">
    <property type="entry name" value="ADH-like_N"/>
</dbReference>
<dbReference type="InterPro" id="IPR002328">
    <property type="entry name" value="ADH_Zn_CS"/>
</dbReference>
<dbReference type="InterPro" id="IPR047109">
    <property type="entry name" value="CAD-like"/>
</dbReference>
<dbReference type="InterPro" id="IPR011032">
    <property type="entry name" value="GroES-like_sf"/>
</dbReference>
<dbReference type="InterPro" id="IPR036291">
    <property type="entry name" value="NAD(P)-bd_dom_sf"/>
</dbReference>
<dbReference type="InterPro" id="IPR020843">
    <property type="entry name" value="PKS_ER"/>
</dbReference>
<dbReference type="PANTHER" id="PTHR42683">
    <property type="entry name" value="ALDEHYDE REDUCTASE"/>
    <property type="match status" value="1"/>
</dbReference>
<dbReference type="Pfam" id="PF08240">
    <property type="entry name" value="ADH_N"/>
    <property type="match status" value="1"/>
</dbReference>
<dbReference type="Pfam" id="PF00107">
    <property type="entry name" value="ADH_zinc_N"/>
    <property type="match status" value="1"/>
</dbReference>
<dbReference type="SMART" id="SM00829">
    <property type="entry name" value="PKS_ER"/>
    <property type="match status" value="1"/>
</dbReference>
<dbReference type="SUPFAM" id="SSF50129">
    <property type="entry name" value="GroES-like"/>
    <property type="match status" value="1"/>
</dbReference>
<dbReference type="SUPFAM" id="SSF51735">
    <property type="entry name" value="NAD(P)-binding Rossmann-fold domains"/>
    <property type="match status" value="1"/>
</dbReference>
<dbReference type="PROSITE" id="PS00059">
    <property type="entry name" value="ADH_ZINC"/>
    <property type="match status" value="1"/>
</dbReference>
<sequence length="337" mass="36210">ILSPFKFSRRATGDNDVRFKVLYCGVCHSDLHMVKNEWGMTTYPIVPGHEIVGRVTEVGSKVEKFKVGDAVGVGCLVGSCLSCENCDDDSENNCAKQVQTYAFTNVDGSITYGGYADSMVADQHFVLRWPENLPLDSGAPLLCAGITTYSPLRYHGLDKPGTKVGVVGLGGLGHVAVKMAKAFGAHVTVISTSESKKQEALEKLGADEFLVSSDSDQMQAATGTLHGIIDTVSALHPVVPLLGLLKVNGKLVMVGAPEKPLELPVFPLLMGRKVLAGSNIGGLKETQEMLDFAAQHNITADVEVIPVDYVNTAMERLVKSDVRYRFVIDVANTIKTE</sequence>
<feature type="chain" id="PRO_0000160814" description="Mannitol dehydrogenase">
    <location>
        <begin position="1" status="less than"/>
        <end position="337"/>
    </location>
</feature>
<feature type="binding site" evidence="1">
    <location>
        <position position="27"/>
    </location>
    <ligand>
        <name>Zn(2+)</name>
        <dbReference type="ChEBI" id="CHEBI:29105"/>
        <label>1</label>
        <note>catalytic</note>
    </ligand>
</feature>
<feature type="binding site" evidence="1">
    <location>
        <position position="49"/>
    </location>
    <ligand>
        <name>Zn(2+)</name>
        <dbReference type="ChEBI" id="CHEBI:29105"/>
        <label>1</label>
        <note>catalytic</note>
    </ligand>
</feature>
<feature type="binding site" evidence="1">
    <location>
        <position position="80"/>
    </location>
    <ligand>
        <name>Zn(2+)</name>
        <dbReference type="ChEBI" id="CHEBI:29105"/>
        <label>2</label>
    </ligand>
</feature>
<feature type="binding site" evidence="1">
    <location>
        <position position="83"/>
    </location>
    <ligand>
        <name>Zn(2+)</name>
        <dbReference type="ChEBI" id="CHEBI:29105"/>
        <label>2</label>
    </ligand>
</feature>
<feature type="binding site" evidence="1">
    <location>
        <position position="86"/>
    </location>
    <ligand>
        <name>Zn(2+)</name>
        <dbReference type="ChEBI" id="CHEBI:29105"/>
        <label>2</label>
    </ligand>
</feature>
<feature type="binding site" evidence="1">
    <location>
        <position position="94"/>
    </location>
    <ligand>
        <name>Zn(2+)</name>
        <dbReference type="ChEBI" id="CHEBI:29105"/>
        <label>2</label>
    </ligand>
</feature>
<feature type="binding site" evidence="1">
    <location>
        <position position="143"/>
    </location>
    <ligand>
        <name>Zn(2+)</name>
        <dbReference type="ChEBI" id="CHEBI:29105"/>
        <label>1</label>
        <note>catalytic</note>
    </ligand>
</feature>
<feature type="non-terminal residue">
    <location>
        <position position="1"/>
    </location>
</feature>
<gene>
    <name type="primary">ELI3</name>
</gene>
<keyword id="KW-0479">Metal-binding</keyword>
<keyword id="KW-0520">NAD</keyword>
<keyword id="KW-0560">Oxidoreductase</keyword>
<keyword id="KW-0862">Zinc</keyword>
<protein>
    <recommendedName>
        <fullName>Mannitol dehydrogenase</fullName>
        <ecNumber>1.1.1.255</ecNumber>
    </recommendedName>
    <alternativeName>
        <fullName>NAD-dependent mannitol dehydrogenase</fullName>
    </alternativeName>
</protein>
<name>MTDH_PETCR</name>
<proteinExistence type="evidence at transcript level"/>
<comment type="function">
    <text evidence="1">Oxidizes mannitol to mannose. Provides the initial step by which translocated mannitol is committed to central metabolism and, by regulating mannitol pool size, is important in regulating salt tolerance at the cellular level (By similarity).</text>
</comment>
<comment type="catalytic activity">
    <reaction>
        <text>D-mannitol + NAD(+) = D-mannose + NADH + H(+)</text>
        <dbReference type="Rhea" id="RHEA:15029"/>
        <dbReference type="ChEBI" id="CHEBI:4208"/>
        <dbReference type="ChEBI" id="CHEBI:15378"/>
        <dbReference type="ChEBI" id="CHEBI:16899"/>
        <dbReference type="ChEBI" id="CHEBI:57540"/>
        <dbReference type="ChEBI" id="CHEBI:57945"/>
        <dbReference type="EC" id="1.1.1.255"/>
    </reaction>
</comment>
<comment type="cofactor">
    <cofactor evidence="1">
        <name>Zn(2+)</name>
        <dbReference type="ChEBI" id="CHEBI:29105"/>
    </cofactor>
    <text evidence="1">Binds 2 Zn(2+) ions per subunit.</text>
</comment>
<comment type="similarity">
    <text evidence="2">Belongs to the zinc-containing alcohol dehydrogenase family.</text>
</comment>